<proteinExistence type="inferred from homology"/>
<comment type="similarity">
    <text evidence="1">Belongs to the bacterial ribosomal protein bL35 family.</text>
</comment>
<evidence type="ECO:0000255" key="1">
    <source>
        <dbReference type="HAMAP-Rule" id="MF_00514"/>
    </source>
</evidence>
<evidence type="ECO:0000305" key="2"/>
<protein>
    <recommendedName>
        <fullName evidence="1">Large ribosomal subunit protein bL35</fullName>
    </recommendedName>
    <alternativeName>
        <fullName evidence="2">50S ribosomal protein L35</fullName>
    </alternativeName>
</protein>
<keyword id="KW-1185">Reference proteome</keyword>
<keyword id="KW-0687">Ribonucleoprotein</keyword>
<keyword id="KW-0689">Ribosomal protein</keyword>
<sequence>MPKLKTKSAVKKRFSLSSSGKLKVTQAGKRHFMRRRTKKQLRNLRSTTTLIGQDAKNIIKYLMPYGVQ</sequence>
<dbReference type="EMBL" id="AM494475">
    <property type="protein sequence ID" value="CAM79623.1"/>
    <property type="molecule type" value="Genomic_DNA"/>
</dbReference>
<dbReference type="RefSeq" id="WP_011944543.1">
    <property type="nucleotide sequence ID" value="NC_009488.1"/>
</dbReference>
<dbReference type="SMR" id="A5CCZ3"/>
<dbReference type="KEGG" id="ots:OTBS_0557"/>
<dbReference type="eggNOG" id="COG0291">
    <property type="taxonomic scope" value="Bacteria"/>
</dbReference>
<dbReference type="HOGENOM" id="CLU_169643_2_1_5"/>
<dbReference type="Proteomes" id="UP000001565">
    <property type="component" value="Chromosome"/>
</dbReference>
<dbReference type="GO" id="GO:0022625">
    <property type="term" value="C:cytosolic large ribosomal subunit"/>
    <property type="evidence" value="ECO:0007669"/>
    <property type="project" value="TreeGrafter"/>
</dbReference>
<dbReference type="GO" id="GO:0003735">
    <property type="term" value="F:structural constituent of ribosome"/>
    <property type="evidence" value="ECO:0007669"/>
    <property type="project" value="InterPro"/>
</dbReference>
<dbReference type="GO" id="GO:0006412">
    <property type="term" value="P:translation"/>
    <property type="evidence" value="ECO:0007669"/>
    <property type="project" value="UniProtKB-UniRule"/>
</dbReference>
<dbReference type="FunFam" id="4.10.410.60:FF:000001">
    <property type="entry name" value="50S ribosomal protein L35"/>
    <property type="match status" value="1"/>
</dbReference>
<dbReference type="Gene3D" id="4.10.410.60">
    <property type="match status" value="1"/>
</dbReference>
<dbReference type="HAMAP" id="MF_00514">
    <property type="entry name" value="Ribosomal_bL35"/>
    <property type="match status" value="1"/>
</dbReference>
<dbReference type="InterPro" id="IPR001706">
    <property type="entry name" value="Ribosomal_bL35"/>
</dbReference>
<dbReference type="InterPro" id="IPR021137">
    <property type="entry name" value="Ribosomal_bL35-like"/>
</dbReference>
<dbReference type="InterPro" id="IPR018265">
    <property type="entry name" value="Ribosomal_bL35_CS"/>
</dbReference>
<dbReference type="InterPro" id="IPR037229">
    <property type="entry name" value="Ribosomal_bL35_sf"/>
</dbReference>
<dbReference type="NCBIfam" id="TIGR00001">
    <property type="entry name" value="rpmI_bact"/>
    <property type="match status" value="1"/>
</dbReference>
<dbReference type="PANTHER" id="PTHR33343">
    <property type="entry name" value="54S RIBOSOMAL PROTEIN BL35M"/>
    <property type="match status" value="1"/>
</dbReference>
<dbReference type="PANTHER" id="PTHR33343:SF1">
    <property type="entry name" value="LARGE RIBOSOMAL SUBUNIT PROTEIN BL35M"/>
    <property type="match status" value="1"/>
</dbReference>
<dbReference type="Pfam" id="PF01632">
    <property type="entry name" value="Ribosomal_L35p"/>
    <property type="match status" value="1"/>
</dbReference>
<dbReference type="PRINTS" id="PR00064">
    <property type="entry name" value="RIBOSOMALL35"/>
</dbReference>
<dbReference type="SUPFAM" id="SSF143034">
    <property type="entry name" value="L35p-like"/>
    <property type="match status" value="1"/>
</dbReference>
<dbReference type="PROSITE" id="PS00936">
    <property type="entry name" value="RIBOSOMAL_L35"/>
    <property type="match status" value="1"/>
</dbReference>
<name>RL35_ORITB</name>
<gene>
    <name evidence="1" type="primary">rpmI</name>
    <name type="ordered locus">OTBS_0557</name>
</gene>
<feature type="chain" id="PRO_1000050732" description="Large ribosomal subunit protein bL35">
    <location>
        <begin position="1"/>
        <end position="68"/>
    </location>
</feature>
<organism>
    <name type="scientific">Orientia tsutsugamushi (strain Boryong)</name>
    <name type="common">Rickettsia tsutsugamushi</name>
    <dbReference type="NCBI Taxonomy" id="357244"/>
    <lineage>
        <taxon>Bacteria</taxon>
        <taxon>Pseudomonadati</taxon>
        <taxon>Pseudomonadota</taxon>
        <taxon>Alphaproteobacteria</taxon>
        <taxon>Rickettsiales</taxon>
        <taxon>Rickettsiaceae</taxon>
        <taxon>Rickettsieae</taxon>
        <taxon>Orientia</taxon>
    </lineage>
</organism>
<reference key="1">
    <citation type="journal article" date="2007" name="Proc. Natl. Acad. Sci. U.S.A.">
        <title>The Orientia tsutsugamushi genome reveals massive proliferation of conjugative type IV secretion system and host-cell interaction genes.</title>
        <authorList>
            <person name="Cho N.-H."/>
            <person name="Kim H.-R."/>
            <person name="Lee J.-H."/>
            <person name="Kim S.-Y."/>
            <person name="Kim J."/>
            <person name="Cha S."/>
            <person name="Kim S.-Y."/>
            <person name="Darby A.C."/>
            <person name="Fuxelius H.-H."/>
            <person name="Yin J."/>
            <person name="Kim J.H."/>
            <person name="Kim J."/>
            <person name="Lee S.J."/>
            <person name="Koh Y.-S."/>
            <person name="Jang W.-J."/>
            <person name="Park K.-H."/>
            <person name="Andersson S.G.E."/>
            <person name="Choi M.-S."/>
            <person name="Kim I.-S."/>
        </authorList>
    </citation>
    <scope>NUCLEOTIDE SEQUENCE [LARGE SCALE GENOMIC DNA]</scope>
    <source>
        <strain>Boryong</strain>
    </source>
</reference>
<accession>A5CCZ3</accession>